<gene>
    <name evidence="4" type="primary">lonp-2</name>
    <name evidence="4" type="ORF">Y75B8A.4</name>
</gene>
<protein>
    <recommendedName>
        <fullName evidence="1">Lon protease homolog 2, peroxisomal</fullName>
        <ecNumber evidence="1">3.4.21.53</ecNumber>
    </recommendedName>
</protein>
<sequence length="773" mass="85613">MKIEENMELPVILVTSGVLLPGASLKIPIRSKLNIQTIEKYLTRSSNDNYVVIAYKVSTDKVYEVATIAYVEKLFGWTFNSTVHYSLDVIGLHRANIDKLSLPTCIVSKVVDLNEAISNQNAIEKLVTGAKIIASNSLTDKFSREIYSLIDEKEYGKLADLCVSQMKFLGFMQLLEFLGANGTDARVEMCIKWMNEKKDANTLKLKVPNSLEASFPVDGKKRKIPNVKNQVEQLEEKLNAIEFSDEVSDRVYSELHRLKSMNAQQSEYNILMNWLELVSSLPWNTSTIDDIELHKARTILTESHEAMDDVKERVLEHLAVCKMNNSVKGMILCFTGPPGIGKTSIAKAIAESMGRKFQRVSLGGIRDESDIRGHRRTYVAAMPGRIIEALKTCKTNNPVFLLDEVDKLYSGNQGSPSAALLELLDPEQNSTFHDHYLNIPFDVSKIMFIATANDIDRLEPALRDRLEIIEMSGYSLKEKVKICENHLLTRQLTKHCISHDYVKLERQAIVAMIEEYTMEAGVRQLERNVGAICRNVALRLAEALNSDPGADVLPVMELPIQISASNIHKILKNKHMKRVKIVEKMRPLPAGVCFGLSVTTIGGRVMPIEASKSKGTGKIVTTGHLGKVLKESILVAKGWLSANSERLGLGTLEDQDIHVHLPAGAVNKDGPSAGTGLACALVSLATNIPLRSDAAVTGEISLTGHVLPIGGVKEKVLAAQREGLRRVVLPKSNEEEYLKMDEDIRLEMDVVLAETIEDVIGAMMDKSPVLAKL</sequence>
<organism>
    <name type="scientific">Caenorhabditis elegans</name>
    <dbReference type="NCBI Taxonomy" id="6239"/>
    <lineage>
        <taxon>Eukaryota</taxon>
        <taxon>Metazoa</taxon>
        <taxon>Ecdysozoa</taxon>
        <taxon>Nematoda</taxon>
        <taxon>Chromadorea</taxon>
        <taxon>Rhabditida</taxon>
        <taxon>Rhabditina</taxon>
        <taxon>Rhabditomorpha</taxon>
        <taxon>Rhabditoidea</taxon>
        <taxon>Rhabditidae</taxon>
        <taxon>Peloderinae</taxon>
        <taxon>Caenorhabditis</taxon>
    </lineage>
</organism>
<proteinExistence type="inferred from homology"/>
<dbReference type="EC" id="3.4.21.53" evidence="1"/>
<dbReference type="EMBL" id="AL033514">
    <property type="protein sequence ID" value="CAA22082.1"/>
    <property type="molecule type" value="Genomic_DNA"/>
</dbReference>
<dbReference type="PIR" id="T27382">
    <property type="entry name" value="T27382"/>
</dbReference>
<dbReference type="RefSeq" id="NP_499577.1">
    <property type="nucleotide sequence ID" value="NM_067176.5"/>
</dbReference>
<dbReference type="SMR" id="Q9XW87"/>
<dbReference type="FunCoup" id="Q9XW87">
    <property type="interactions" value="806"/>
</dbReference>
<dbReference type="STRING" id="6239.Y75B8A.4.1"/>
<dbReference type="MEROPS" id="S16.A06"/>
<dbReference type="PaxDb" id="6239-Y75B8A.4"/>
<dbReference type="PeptideAtlas" id="Q9XW87"/>
<dbReference type="EnsemblMetazoa" id="Y75B8A.4.1">
    <property type="protein sequence ID" value="Y75B8A.4.1"/>
    <property type="gene ID" value="WBGene00013541"/>
</dbReference>
<dbReference type="GeneID" id="176643"/>
<dbReference type="KEGG" id="cel:CELE_Y75B8A.4"/>
<dbReference type="UCSC" id="Y75B8A.4.1">
    <property type="organism name" value="c. elegans"/>
</dbReference>
<dbReference type="AGR" id="WB:WBGene00013541"/>
<dbReference type="CTD" id="176643"/>
<dbReference type="WormBase" id="Y75B8A.4">
    <property type="protein sequence ID" value="CE23016"/>
    <property type="gene ID" value="WBGene00013541"/>
    <property type="gene designation" value="lonp-2"/>
</dbReference>
<dbReference type="eggNOG" id="KOG2004">
    <property type="taxonomic scope" value="Eukaryota"/>
</dbReference>
<dbReference type="GeneTree" id="ENSGT00530000063553"/>
<dbReference type="HOGENOM" id="CLU_004109_4_3_1"/>
<dbReference type="InParanoid" id="Q9XW87"/>
<dbReference type="OMA" id="EYFLHQQ"/>
<dbReference type="OrthoDB" id="2411602at2759"/>
<dbReference type="PhylomeDB" id="Q9XW87"/>
<dbReference type="Reactome" id="R-CEL-9033241">
    <property type="pathway name" value="Peroxisomal protein import"/>
</dbReference>
<dbReference type="PRO" id="PR:Q9XW87"/>
<dbReference type="Proteomes" id="UP000001940">
    <property type="component" value="Chromosome III"/>
</dbReference>
<dbReference type="Bgee" id="WBGene00013541">
    <property type="expression patterns" value="Expressed in larva and 4 other cell types or tissues"/>
</dbReference>
<dbReference type="GO" id="GO:0005782">
    <property type="term" value="C:peroxisomal matrix"/>
    <property type="evidence" value="ECO:0000318"/>
    <property type="project" value="GO_Central"/>
</dbReference>
<dbReference type="GO" id="GO:0005524">
    <property type="term" value="F:ATP binding"/>
    <property type="evidence" value="ECO:0007669"/>
    <property type="project" value="UniProtKB-UniRule"/>
</dbReference>
<dbReference type="GO" id="GO:0016887">
    <property type="term" value="F:ATP hydrolysis activity"/>
    <property type="evidence" value="ECO:0007669"/>
    <property type="project" value="UniProtKB-UniRule"/>
</dbReference>
<dbReference type="GO" id="GO:0004176">
    <property type="term" value="F:ATP-dependent peptidase activity"/>
    <property type="evidence" value="ECO:0007669"/>
    <property type="project" value="UniProtKB-UniRule"/>
</dbReference>
<dbReference type="GO" id="GO:0004252">
    <property type="term" value="F:serine-type endopeptidase activity"/>
    <property type="evidence" value="ECO:0007669"/>
    <property type="project" value="UniProtKB-UniRule"/>
</dbReference>
<dbReference type="GO" id="GO:0016558">
    <property type="term" value="P:protein import into peroxisome matrix"/>
    <property type="evidence" value="ECO:0007669"/>
    <property type="project" value="UniProtKB-UniRule"/>
</dbReference>
<dbReference type="GO" id="GO:0016485">
    <property type="term" value="P:protein processing"/>
    <property type="evidence" value="ECO:0000318"/>
    <property type="project" value="GO_Central"/>
</dbReference>
<dbReference type="GO" id="GO:0006515">
    <property type="term" value="P:protein quality control for misfolded or incompletely synthesized proteins"/>
    <property type="evidence" value="ECO:0007669"/>
    <property type="project" value="UniProtKB-UniRule"/>
</dbReference>
<dbReference type="GO" id="GO:0006625">
    <property type="term" value="P:protein targeting to peroxisome"/>
    <property type="evidence" value="ECO:0000318"/>
    <property type="project" value="GO_Central"/>
</dbReference>
<dbReference type="CDD" id="cd19500">
    <property type="entry name" value="RecA-like_Lon"/>
    <property type="match status" value="1"/>
</dbReference>
<dbReference type="FunFam" id="3.40.50.300:FF:000021">
    <property type="entry name" value="Lon protease homolog"/>
    <property type="match status" value="1"/>
</dbReference>
<dbReference type="FunFam" id="1.10.8.60:FF:000091">
    <property type="entry name" value="Lon protease homolog 2, peroxisomal"/>
    <property type="match status" value="1"/>
</dbReference>
<dbReference type="FunFam" id="3.30.230.10:FF:000118">
    <property type="entry name" value="Lon protease homolog 2, peroxisomal"/>
    <property type="match status" value="1"/>
</dbReference>
<dbReference type="Gene3D" id="1.10.8.60">
    <property type="match status" value="1"/>
</dbReference>
<dbReference type="Gene3D" id="1.20.5.5270">
    <property type="match status" value="1"/>
</dbReference>
<dbReference type="Gene3D" id="3.30.230.10">
    <property type="match status" value="1"/>
</dbReference>
<dbReference type="Gene3D" id="2.30.130.40">
    <property type="entry name" value="LON domain-like"/>
    <property type="match status" value="1"/>
</dbReference>
<dbReference type="Gene3D" id="3.40.50.300">
    <property type="entry name" value="P-loop containing nucleotide triphosphate hydrolases"/>
    <property type="match status" value="1"/>
</dbReference>
<dbReference type="HAMAP" id="MF_03121">
    <property type="entry name" value="lonp2_euk"/>
    <property type="match status" value="1"/>
</dbReference>
<dbReference type="InterPro" id="IPR003593">
    <property type="entry name" value="AAA+_ATPase"/>
</dbReference>
<dbReference type="InterPro" id="IPR003959">
    <property type="entry name" value="ATPase_AAA_core"/>
</dbReference>
<dbReference type="InterPro" id="IPR004815">
    <property type="entry name" value="Lon_bac/euk-typ"/>
</dbReference>
<dbReference type="InterPro" id="IPR054594">
    <property type="entry name" value="Lon_lid"/>
</dbReference>
<dbReference type="InterPro" id="IPR008269">
    <property type="entry name" value="Lon_proteolytic"/>
</dbReference>
<dbReference type="InterPro" id="IPR027065">
    <property type="entry name" value="Lon_Prtase"/>
</dbReference>
<dbReference type="InterPro" id="IPR003111">
    <property type="entry name" value="Lon_prtase_N"/>
</dbReference>
<dbReference type="InterPro" id="IPR046336">
    <property type="entry name" value="Lon_prtase_N_sf"/>
</dbReference>
<dbReference type="InterPro" id="IPR027501">
    <property type="entry name" value="Lonp2_euk"/>
</dbReference>
<dbReference type="InterPro" id="IPR027417">
    <property type="entry name" value="P-loop_NTPase"/>
</dbReference>
<dbReference type="InterPro" id="IPR020568">
    <property type="entry name" value="Ribosomal_Su5_D2-typ_SF"/>
</dbReference>
<dbReference type="InterPro" id="IPR014721">
    <property type="entry name" value="Ribsml_uS5_D2-typ_fold_subgr"/>
</dbReference>
<dbReference type="NCBIfam" id="TIGR00763">
    <property type="entry name" value="lon"/>
    <property type="match status" value="1"/>
</dbReference>
<dbReference type="PANTHER" id="PTHR10046">
    <property type="entry name" value="ATP DEPENDENT LON PROTEASE FAMILY MEMBER"/>
    <property type="match status" value="1"/>
</dbReference>
<dbReference type="Pfam" id="PF00004">
    <property type="entry name" value="AAA"/>
    <property type="match status" value="1"/>
</dbReference>
<dbReference type="Pfam" id="PF05362">
    <property type="entry name" value="Lon_C"/>
    <property type="match status" value="1"/>
</dbReference>
<dbReference type="Pfam" id="PF22667">
    <property type="entry name" value="Lon_lid"/>
    <property type="match status" value="1"/>
</dbReference>
<dbReference type="Pfam" id="PF02190">
    <property type="entry name" value="LON_substr_bdg"/>
    <property type="match status" value="1"/>
</dbReference>
<dbReference type="PIRSF" id="PIRSF001174">
    <property type="entry name" value="Lon_proteas"/>
    <property type="match status" value="1"/>
</dbReference>
<dbReference type="PRINTS" id="PR00830">
    <property type="entry name" value="ENDOLAPTASE"/>
</dbReference>
<dbReference type="SMART" id="SM00382">
    <property type="entry name" value="AAA"/>
    <property type="match status" value="1"/>
</dbReference>
<dbReference type="SMART" id="SM00464">
    <property type="entry name" value="LON"/>
    <property type="match status" value="1"/>
</dbReference>
<dbReference type="SUPFAM" id="SSF52540">
    <property type="entry name" value="P-loop containing nucleoside triphosphate hydrolases"/>
    <property type="match status" value="1"/>
</dbReference>
<dbReference type="SUPFAM" id="SSF54211">
    <property type="entry name" value="Ribosomal protein S5 domain 2-like"/>
    <property type="match status" value="1"/>
</dbReference>
<dbReference type="PROSITE" id="PS51787">
    <property type="entry name" value="LON_N"/>
    <property type="match status" value="1"/>
</dbReference>
<dbReference type="PROSITE" id="PS51786">
    <property type="entry name" value="LON_PROTEOLYTIC"/>
    <property type="match status" value="1"/>
</dbReference>
<accession>Q9XW87</accession>
<name>LONP2_CAEEL</name>
<comment type="function">
    <text evidence="1">ATP-dependent serine protease that mediates the selective degradation of misfolded and unassembled polypeptides in the peroxisomal matrix. Necessary for type 2 peroxisome targeting signal (PTS2)-containing protein processing and facilitates peroxisome matrix protein import.</text>
</comment>
<comment type="catalytic activity">
    <reaction evidence="1">
        <text>Hydrolysis of proteins in presence of ATP.</text>
        <dbReference type="EC" id="3.4.21.53"/>
    </reaction>
</comment>
<comment type="subcellular location">
    <subcellularLocation>
        <location evidence="1">Peroxisome matrix</location>
    </subcellularLocation>
</comment>
<comment type="similarity">
    <text evidence="1">Belongs to the peptidase S16 family.</text>
</comment>
<feature type="chain" id="PRO_0000395785" description="Lon protease homolog 2, peroxisomal">
    <location>
        <begin position="1"/>
        <end position="773"/>
    </location>
</feature>
<feature type="domain" description="Lon N-terminal" evidence="3">
    <location>
        <begin position="9"/>
        <end position="198"/>
    </location>
</feature>
<feature type="domain" description="Lon proteolytic" evidence="2">
    <location>
        <begin position="587"/>
        <end position="766"/>
    </location>
</feature>
<feature type="short sequence motif" description="Microbody targeting signal" evidence="1">
    <location>
        <begin position="771"/>
        <end position="773"/>
    </location>
</feature>
<feature type="active site" evidence="1">
    <location>
        <position position="672"/>
    </location>
</feature>
<feature type="active site" evidence="1">
    <location>
        <position position="715"/>
    </location>
</feature>
<feature type="binding site" evidence="1">
    <location>
        <begin position="336"/>
        <end position="343"/>
    </location>
    <ligand>
        <name>ATP</name>
        <dbReference type="ChEBI" id="CHEBI:30616"/>
    </ligand>
</feature>
<evidence type="ECO:0000255" key="1">
    <source>
        <dbReference type="HAMAP-Rule" id="MF_03121"/>
    </source>
</evidence>
<evidence type="ECO:0000255" key="2">
    <source>
        <dbReference type="PROSITE-ProRule" id="PRU01122"/>
    </source>
</evidence>
<evidence type="ECO:0000255" key="3">
    <source>
        <dbReference type="PROSITE-ProRule" id="PRU01123"/>
    </source>
</evidence>
<evidence type="ECO:0000312" key="4">
    <source>
        <dbReference type="WormBase" id="Y75B8A.4"/>
    </source>
</evidence>
<keyword id="KW-0067">ATP-binding</keyword>
<keyword id="KW-0378">Hydrolase</keyword>
<keyword id="KW-0547">Nucleotide-binding</keyword>
<keyword id="KW-0576">Peroxisome</keyword>
<keyword id="KW-0645">Protease</keyword>
<keyword id="KW-1185">Reference proteome</keyword>
<keyword id="KW-0720">Serine protease</keyword>
<reference key="1">
    <citation type="journal article" date="1998" name="Science">
        <title>Genome sequence of the nematode C. elegans: a platform for investigating biology.</title>
        <authorList>
            <consortium name="The C. elegans sequencing consortium"/>
        </authorList>
    </citation>
    <scope>NUCLEOTIDE SEQUENCE [LARGE SCALE GENOMIC DNA]</scope>
    <source>
        <strain>Bristol N2</strain>
    </source>
</reference>